<sequence>MSAEKQKYGVHSEAGKLRKVMVCSPGLAHKRLTPSNCDELLFDDVIWVDQAKRDHFDFVTKMRERGVDVLEMHNLLTDIVQQPEALKWILDRKITSDTVGVGLTNEVRSWLEGLEPRHLAEFLIGGVAGQDLPVSEGAEVIKMYNKYLGHSSFILPPLPNTQFTRDTTCWIYGGVTLNPMYWPARRQETLLTTAIYKFHKEFTGADFQVWYGDPDKDHGNATLEGGDVMPVGKGIVLIGMGERTSRHAIGQLAQNLFEKGAAEKIIVAGLPKSRAAMHLDTVFSFCDRDLVTVFPEVVKEIKPFIITPDSSKPYGMNIAPQDASFLEVVSEQLLGKKDKLRVVETGGNSFAAEREQWDDGNNVVALEPGVVIGYDRNTYTNTLLRKAGIEVITISAGELGRGRGGGHCMTCPIVRDPIDY</sequence>
<reference key="1">
    <citation type="submission" date="1994-02" db="EMBL/GenBank/DDBJ databases">
        <authorList>
            <person name="Wilson S.D."/>
            <person name="Wang M."/>
            <person name="Filpula D."/>
        </authorList>
    </citation>
    <scope>NUCLEOTIDE SEQUENCE [GENOMIC DNA]</scope>
    <source>
        <strain>ATCC 4359 / IAM 1506 / JCM 20188</strain>
    </source>
</reference>
<reference key="2">
    <citation type="journal article" date="1975" name="J. Biol. Chem.">
        <title>Crystallization and properties of L-arginine deiminase of Pseudomonas putida.</title>
        <authorList>
            <person name="Shibatani T."/>
            <person name="Kakimoto T."/>
            <person name="Chibat I."/>
        </authorList>
    </citation>
    <scope>CHARACTERIZATION</scope>
    <scope>CRYSTALLIZATION</scope>
</reference>
<keyword id="KW-0056">Arginine metabolism</keyword>
<keyword id="KW-0963">Cytoplasm</keyword>
<keyword id="KW-0378">Hydrolase</keyword>
<feature type="chain" id="PRO_0000182227" description="Arginine deiminase">
    <location>
        <begin position="1"/>
        <end position="420"/>
    </location>
</feature>
<feature type="active site" description="Amidino-cysteine intermediate" evidence="1">
    <location>
        <position position="408"/>
    </location>
</feature>
<evidence type="ECO:0000250" key="1"/>
<evidence type="ECO:0000305" key="2"/>
<name>ARCA_PSEPU</name>
<comment type="catalytic activity">
    <reaction>
        <text>L-arginine + H2O = L-citrulline + NH4(+)</text>
        <dbReference type="Rhea" id="RHEA:19597"/>
        <dbReference type="ChEBI" id="CHEBI:15377"/>
        <dbReference type="ChEBI" id="CHEBI:28938"/>
        <dbReference type="ChEBI" id="CHEBI:32682"/>
        <dbReference type="ChEBI" id="CHEBI:57743"/>
        <dbReference type="EC" id="3.5.3.6"/>
    </reaction>
</comment>
<comment type="activity regulation">
    <text evidence="1">Activated by Mg(2+) or Mn(2+) and strongly inhibited by Zn(2+).</text>
</comment>
<comment type="pathway">
    <text>Amino-acid degradation; L-arginine degradation via ADI pathway; carbamoyl phosphate from L-arginine: step 1/2.</text>
</comment>
<comment type="subunit">
    <text>Homodimer.</text>
</comment>
<comment type="subcellular location">
    <subcellularLocation>
        <location evidence="2">Cytoplasm</location>
    </subcellularLocation>
</comment>
<comment type="similarity">
    <text evidence="2">Belongs to the arginine deiminase family.</text>
</comment>
<protein>
    <recommendedName>
        <fullName>Arginine deiminase</fullName>
        <shortName>ADI</shortName>
        <ecNumber>3.5.3.6</ecNumber>
    </recommendedName>
    <alternativeName>
        <fullName>Arginine dihydrolase</fullName>
        <shortName>AD</shortName>
    </alternativeName>
</protein>
<dbReference type="EC" id="3.5.3.6"/>
<dbReference type="EMBL" id="U07185">
    <property type="protein sequence ID" value="AAA16964.1"/>
    <property type="molecule type" value="Unassigned_DNA"/>
</dbReference>
<dbReference type="RefSeq" id="WP_016485080.1">
    <property type="nucleotide sequence ID" value="NZ_JAUTCF010000009.1"/>
</dbReference>
<dbReference type="SMR" id="P41142"/>
<dbReference type="eggNOG" id="COG2235">
    <property type="taxonomic scope" value="Bacteria"/>
</dbReference>
<dbReference type="UniPathway" id="UPA00254">
    <property type="reaction ID" value="UER00364"/>
</dbReference>
<dbReference type="GO" id="GO:0005737">
    <property type="term" value="C:cytoplasm"/>
    <property type="evidence" value="ECO:0007669"/>
    <property type="project" value="UniProtKB-SubCell"/>
</dbReference>
<dbReference type="GO" id="GO:0016990">
    <property type="term" value="F:arginine deiminase activity"/>
    <property type="evidence" value="ECO:0007669"/>
    <property type="project" value="UniProtKB-UniRule"/>
</dbReference>
<dbReference type="GO" id="GO:0019547">
    <property type="term" value="P:arginine catabolic process to ornithine"/>
    <property type="evidence" value="ECO:0007669"/>
    <property type="project" value="UniProtKB-UniRule"/>
</dbReference>
<dbReference type="GO" id="GO:0019546">
    <property type="term" value="P:arginine deiminase pathway"/>
    <property type="evidence" value="ECO:0007669"/>
    <property type="project" value="TreeGrafter"/>
</dbReference>
<dbReference type="Gene3D" id="1.10.3930.10">
    <property type="entry name" value="Arginine deiminase"/>
    <property type="match status" value="1"/>
</dbReference>
<dbReference type="Gene3D" id="3.75.10.10">
    <property type="entry name" value="L-arginine/glycine Amidinotransferase, Chain A"/>
    <property type="match status" value="1"/>
</dbReference>
<dbReference type="HAMAP" id="MF_00242">
    <property type="entry name" value="Arg_deiminase"/>
    <property type="match status" value="1"/>
</dbReference>
<dbReference type="InterPro" id="IPR003876">
    <property type="entry name" value="Arg_deiminase"/>
</dbReference>
<dbReference type="NCBIfam" id="TIGR01078">
    <property type="entry name" value="arcA"/>
    <property type="match status" value="1"/>
</dbReference>
<dbReference type="NCBIfam" id="NF002381">
    <property type="entry name" value="PRK01388.1"/>
    <property type="match status" value="1"/>
</dbReference>
<dbReference type="PANTHER" id="PTHR47271">
    <property type="entry name" value="ARGININE DEIMINASE"/>
    <property type="match status" value="1"/>
</dbReference>
<dbReference type="PANTHER" id="PTHR47271:SF3">
    <property type="entry name" value="ARGININE DEIMINASE"/>
    <property type="match status" value="1"/>
</dbReference>
<dbReference type="Pfam" id="PF02274">
    <property type="entry name" value="ADI"/>
    <property type="match status" value="1"/>
</dbReference>
<dbReference type="PIRSF" id="PIRSF006356">
    <property type="entry name" value="Arg_deiminase"/>
    <property type="match status" value="1"/>
</dbReference>
<dbReference type="PRINTS" id="PR01466">
    <property type="entry name" value="ARGDEIMINASE"/>
</dbReference>
<dbReference type="SUPFAM" id="SSF55909">
    <property type="entry name" value="Pentein"/>
    <property type="match status" value="1"/>
</dbReference>
<organism>
    <name type="scientific">Pseudomonas putida</name>
    <name type="common">Arthrobacter siderocapsulatus</name>
    <dbReference type="NCBI Taxonomy" id="303"/>
    <lineage>
        <taxon>Bacteria</taxon>
        <taxon>Pseudomonadati</taxon>
        <taxon>Pseudomonadota</taxon>
        <taxon>Gammaproteobacteria</taxon>
        <taxon>Pseudomonadales</taxon>
        <taxon>Pseudomonadaceae</taxon>
        <taxon>Pseudomonas</taxon>
    </lineage>
</organism>
<gene>
    <name type="primary">arcA</name>
</gene>
<accession>P41142</accession>
<proteinExistence type="evidence at protein level"/>